<keyword id="KW-0067">ATP-binding</keyword>
<keyword id="KW-0315">Glutamine amidotransferase</keyword>
<keyword id="KW-0436">Ligase</keyword>
<keyword id="KW-0460">Magnesium</keyword>
<keyword id="KW-0479">Metal-binding</keyword>
<keyword id="KW-0547">Nucleotide-binding</keyword>
<keyword id="KW-0665">Pyrimidine biosynthesis</keyword>
<protein>
    <recommendedName>
        <fullName evidence="1">CTP synthase</fullName>
        <ecNumber evidence="1">6.3.4.2</ecNumber>
    </recommendedName>
    <alternativeName>
        <fullName evidence="1">Cytidine 5'-triphosphate synthase</fullName>
    </alternativeName>
    <alternativeName>
        <fullName evidence="1">Cytidine triphosphate synthetase</fullName>
        <shortName evidence="1">CTP synthetase</shortName>
        <shortName evidence="1">CTPS</shortName>
    </alternativeName>
    <alternativeName>
        <fullName evidence="1">UTP--ammonia ligase</fullName>
    </alternativeName>
</protein>
<comment type="function">
    <text evidence="1">Catalyzes the ATP-dependent amination of UTP to CTP with either L-glutamine or ammonia as the source of nitrogen. Regulates intracellular CTP levels through interactions with the four ribonucleotide triphosphates.</text>
</comment>
<comment type="catalytic activity">
    <reaction evidence="1">
        <text>UTP + L-glutamine + ATP + H2O = CTP + L-glutamate + ADP + phosphate + 2 H(+)</text>
        <dbReference type="Rhea" id="RHEA:26426"/>
        <dbReference type="ChEBI" id="CHEBI:15377"/>
        <dbReference type="ChEBI" id="CHEBI:15378"/>
        <dbReference type="ChEBI" id="CHEBI:29985"/>
        <dbReference type="ChEBI" id="CHEBI:30616"/>
        <dbReference type="ChEBI" id="CHEBI:37563"/>
        <dbReference type="ChEBI" id="CHEBI:43474"/>
        <dbReference type="ChEBI" id="CHEBI:46398"/>
        <dbReference type="ChEBI" id="CHEBI:58359"/>
        <dbReference type="ChEBI" id="CHEBI:456216"/>
        <dbReference type="EC" id="6.3.4.2"/>
    </reaction>
</comment>
<comment type="catalytic activity">
    <reaction evidence="1">
        <text>L-glutamine + H2O = L-glutamate + NH4(+)</text>
        <dbReference type="Rhea" id="RHEA:15889"/>
        <dbReference type="ChEBI" id="CHEBI:15377"/>
        <dbReference type="ChEBI" id="CHEBI:28938"/>
        <dbReference type="ChEBI" id="CHEBI:29985"/>
        <dbReference type="ChEBI" id="CHEBI:58359"/>
    </reaction>
</comment>
<comment type="catalytic activity">
    <reaction evidence="1">
        <text>UTP + NH4(+) + ATP = CTP + ADP + phosphate + 2 H(+)</text>
        <dbReference type="Rhea" id="RHEA:16597"/>
        <dbReference type="ChEBI" id="CHEBI:15378"/>
        <dbReference type="ChEBI" id="CHEBI:28938"/>
        <dbReference type="ChEBI" id="CHEBI:30616"/>
        <dbReference type="ChEBI" id="CHEBI:37563"/>
        <dbReference type="ChEBI" id="CHEBI:43474"/>
        <dbReference type="ChEBI" id="CHEBI:46398"/>
        <dbReference type="ChEBI" id="CHEBI:456216"/>
    </reaction>
</comment>
<comment type="activity regulation">
    <text evidence="1">Allosterically activated by GTP, when glutamine is the substrate; GTP has no effect on the reaction when ammonia is the substrate. The allosteric effector GTP functions by stabilizing the protein conformation that binds the tetrahedral intermediate(s) formed during glutamine hydrolysis. Inhibited by the product CTP, via allosteric rather than competitive inhibition.</text>
</comment>
<comment type="pathway">
    <text evidence="1">Pyrimidine metabolism; CTP biosynthesis via de novo pathway; CTP from UDP: step 2/2.</text>
</comment>
<comment type="subunit">
    <text evidence="1">Homotetramer.</text>
</comment>
<comment type="miscellaneous">
    <text evidence="1">CTPSs have evolved a hybrid strategy for distinguishing between UTP and CTP. The overlapping regions of the product feedback inhibitory and substrate sites recognize a common feature in both compounds, the triphosphate moiety. To differentiate isosteric substrate and product pyrimidine rings, an additional pocket far from the expected kinase/ligase catalytic site, specifically recognizes the cytosine and ribose portions of the product inhibitor.</text>
</comment>
<comment type="similarity">
    <text evidence="1">Belongs to the CTP synthase family.</text>
</comment>
<organism>
    <name type="scientific">Shewanella putrefaciens (strain CN-32 / ATCC BAA-453)</name>
    <dbReference type="NCBI Taxonomy" id="319224"/>
    <lineage>
        <taxon>Bacteria</taxon>
        <taxon>Pseudomonadati</taxon>
        <taxon>Pseudomonadota</taxon>
        <taxon>Gammaproteobacteria</taxon>
        <taxon>Alteromonadales</taxon>
        <taxon>Shewanellaceae</taxon>
        <taxon>Shewanella</taxon>
    </lineage>
</organism>
<name>PYRG_SHEPC</name>
<feature type="chain" id="PRO_1000139574" description="CTP synthase">
    <location>
        <begin position="1"/>
        <end position="545"/>
    </location>
</feature>
<feature type="domain" description="Glutamine amidotransferase type-1" evidence="1">
    <location>
        <begin position="291"/>
        <end position="542"/>
    </location>
</feature>
<feature type="region of interest" description="Amidoligase domain" evidence="1">
    <location>
        <begin position="1"/>
        <end position="266"/>
    </location>
</feature>
<feature type="active site" description="Nucleophile; for glutamine hydrolysis" evidence="1">
    <location>
        <position position="379"/>
    </location>
</feature>
<feature type="active site" evidence="1">
    <location>
        <position position="515"/>
    </location>
</feature>
<feature type="active site" evidence="1">
    <location>
        <position position="517"/>
    </location>
</feature>
<feature type="binding site" evidence="1">
    <location>
        <position position="14"/>
    </location>
    <ligand>
        <name>CTP</name>
        <dbReference type="ChEBI" id="CHEBI:37563"/>
        <note>allosteric inhibitor</note>
    </ligand>
</feature>
<feature type="binding site" evidence="1">
    <location>
        <position position="14"/>
    </location>
    <ligand>
        <name>UTP</name>
        <dbReference type="ChEBI" id="CHEBI:46398"/>
    </ligand>
</feature>
<feature type="binding site" evidence="1">
    <location>
        <begin position="15"/>
        <end position="20"/>
    </location>
    <ligand>
        <name>ATP</name>
        <dbReference type="ChEBI" id="CHEBI:30616"/>
    </ligand>
</feature>
<feature type="binding site" evidence="1">
    <location>
        <position position="72"/>
    </location>
    <ligand>
        <name>ATP</name>
        <dbReference type="ChEBI" id="CHEBI:30616"/>
    </ligand>
</feature>
<feature type="binding site" evidence="1">
    <location>
        <position position="72"/>
    </location>
    <ligand>
        <name>Mg(2+)</name>
        <dbReference type="ChEBI" id="CHEBI:18420"/>
    </ligand>
</feature>
<feature type="binding site" evidence="1">
    <location>
        <position position="140"/>
    </location>
    <ligand>
        <name>Mg(2+)</name>
        <dbReference type="ChEBI" id="CHEBI:18420"/>
    </ligand>
</feature>
<feature type="binding site" evidence="1">
    <location>
        <begin position="147"/>
        <end position="149"/>
    </location>
    <ligand>
        <name>CTP</name>
        <dbReference type="ChEBI" id="CHEBI:37563"/>
        <note>allosteric inhibitor</note>
    </ligand>
</feature>
<feature type="binding site" evidence="1">
    <location>
        <begin position="187"/>
        <end position="192"/>
    </location>
    <ligand>
        <name>CTP</name>
        <dbReference type="ChEBI" id="CHEBI:37563"/>
        <note>allosteric inhibitor</note>
    </ligand>
</feature>
<feature type="binding site" evidence="1">
    <location>
        <begin position="187"/>
        <end position="192"/>
    </location>
    <ligand>
        <name>UTP</name>
        <dbReference type="ChEBI" id="CHEBI:46398"/>
    </ligand>
</feature>
<feature type="binding site" evidence="1">
    <location>
        <position position="223"/>
    </location>
    <ligand>
        <name>CTP</name>
        <dbReference type="ChEBI" id="CHEBI:37563"/>
        <note>allosteric inhibitor</note>
    </ligand>
</feature>
<feature type="binding site" evidence="1">
    <location>
        <position position="223"/>
    </location>
    <ligand>
        <name>UTP</name>
        <dbReference type="ChEBI" id="CHEBI:46398"/>
    </ligand>
</feature>
<feature type="binding site" evidence="1">
    <location>
        <begin position="239"/>
        <end position="241"/>
    </location>
    <ligand>
        <name>ATP</name>
        <dbReference type="ChEBI" id="CHEBI:30616"/>
    </ligand>
</feature>
<feature type="binding site" evidence="1">
    <location>
        <position position="352"/>
    </location>
    <ligand>
        <name>L-glutamine</name>
        <dbReference type="ChEBI" id="CHEBI:58359"/>
    </ligand>
</feature>
<feature type="binding site" evidence="1">
    <location>
        <begin position="380"/>
        <end position="383"/>
    </location>
    <ligand>
        <name>L-glutamine</name>
        <dbReference type="ChEBI" id="CHEBI:58359"/>
    </ligand>
</feature>
<feature type="binding site" evidence="1">
    <location>
        <position position="403"/>
    </location>
    <ligand>
        <name>L-glutamine</name>
        <dbReference type="ChEBI" id="CHEBI:58359"/>
    </ligand>
</feature>
<feature type="binding site" evidence="1">
    <location>
        <position position="470"/>
    </location>
    <ligand>
        <name>L-glutamine</name>
        <dbReference type="ChEBI" id="CHEBI:58359"/>
    </ligand>
</feature>
<gene>
    <name evidence="1" type="primary">pyrG</name>
    <name type="ordered locus">Sputcn32_2758</name>
</gene>
<reference key="1">
    <citation type="submission" date="2007-04" db="EMBL/GenBank/DDBJ databases">
        <title>Complete sequence of Shewanella putrefaciens CN-32.</title>
        <authorList>
            <consortium name="US DOE Joint Genome Institute"/>
            <person name="Copeland A."/>
            <person name="Lucas S."/>
            <person name="Lapidus A."/>
            <person name="Barry K."/>
            <person name="Detter J.C."/>
            <person name="Glavina del Rio T."/>
            <person name="Hammon N."/>
            <person name="Israni S."/>
            <person name="Dalin E."/>
            <person name="Tice H."/>
            <person name="Pitluck S."/>
            <person name="Chain P."/>
            <person name="Malfatti S."/>
            <person name="Shin M."/>
            <person name="Vergez L."/>
            <person name="Schmutz J."/>
            <person name="Larimer F."/>
            <person name="Land M."/>
            <person name="Hauser L."/>
            <person name="Kyrpides N."/>
            <person name="Mikhailova N."/>
            <person name="Romine M.F."/>
            <person name="Fredrickson J."/>
            <person name="Tiedje J."/>
            <person name="Richardson P."/>
        </authorList>
    </citation>
    <scope>NUCLEOTIDE SEQUENCE [LARGE SCALE GENOMIC DNA]</scope>
    <source>
        <strain>CN-32 / ATCC BAA-453</strain>
    </source>
</reference>
<sequence length="545" mass="60181">MTTRYIFVTGGVVSSLGKGIAAASLAAILEARGLNVTIMKLDPYINVDPGTMSPTQHGEVFVTEDGAETDLDLGHYERFIRTKMNRRNNFTTGRIYEEVLRKERRGDYLGATIQVIPHITNAIKEKVLAGGEGHDVAIVEIGGTVGDIESLPFLESIRQLGVELGRDRTLFMHLTLVPFLGAAGEVKTKPTQHSVKELRSIGIAPDVLICRGDRAIPANERAKISLFCNVEERAVISLKDVDSIYKIPALLRSQGLDDLVVKRFGLECREADLSEWENVIYQEANPNGEVVIGMVGKYIELPDAYKSVNEALKHAGLKNRVSVTIKYIDSQTVEAKGDEVLQGLDGILVPGGFGERGVEGKILAAKFARENKLPYFGICLGMQVALIEFARNVAGMTDAHSTEFNKETPFPVVGLITEWVDEEGNVEQRHEASDLGGTMRLGAQLCHLLEGSKAAQAYKGNSCIERHRHRYEVNNKYRERLEQAGMVFSGLSSDRKLVEMIELKDHPWFVAGQFHPEFTSTPRDGHPLFEGFIAAASAHQKRDLK</sequence>
<evidence type="ECO:0000255" key="1">
    <source>
        <dbReference type="HAMAP-Rule" id="MF_01227"/>
    </source>
</evidence>
<proteinExistence type="inferred from homology"/>
<accession>A4Y944</accession>
<dbReference type="EC" id="6.3.4.2" evidence="1"/>
<dbReference type="EMBL" id="CP000681">
    <property type="protein sequence ID" value="ABP76477.1"/>
    <property type="molecule type" value="Genomic_DNA"/>
</dbReference>
<dbReference type="SMR" id="A4Y944"/>
<dbReference type="STRING" id="319224.Sputcn32_2758"/>
<dbReference type="MEROPS" id="C26.964"/>
<dbReference type="KEGG" id="spc:Sputcn32_2758"/>
<dbReference type="eggNOG" id="COG0504">
    <property type="taxonomic scope" value="Bacteria"/>
</dbReference>
<dbReference type="HOGENOM" id="CLU_011675_5_0_6"/>
<dbReference type="UniPathway" id="UPA00159">
    <property type="reaction ID" value="UER00277"/>
</dbReference>
<dbReference type="GO" id="GO:0005829">
    <property type="term" value="C:cytosol"/>
    <property type="evidence" value="ECO:0007669"/>
    <property type="project" value="TreeGrafter"/>
</dbReference>
<dbReference type="GO" id="GO:0005524">
    <property type="term" value="F:ATP binding"/>
    <property type="evidence" value="ECO:0007669"/>
    <property type="project" value="UniProtKB-KW"/>
</dbReference>
<dbReference type="GO" id="GO:0003883">
    <property type="term" value="F:CTP synthase activity"/>
    <property type="evidence" value="ECO:0007669"/>
    <property type="project" value="UniProtKB-UniRule"/>
</dbReference>
<dbReference type="GO" id="GO:0004359">
    <property type="term" value="F:glutaminase activity"/>
    <property type="evidence" value="ECO:0007669"/>
    <property type="project" value="RHEA"/>
</dbReference>
<dbReference type="GO" id="GO:0042802">
    <property type="term" value="F:identical protein binding"/>
    <property type="evidence" value="ECO:0007669"/>
    <property type="project" value="TreeGrafter"/>
</dbReference>
<dbReference type="GO" id="GO:0046872">
    <property type="term" value="F:metal ion binding"/>
    <property type="evidence" value="ECO:0007669"/>
    <property type="project" value="UniProtKB-KW"/>
</dbReference>
<dbReference type="GO" id="GO:0044210">
    <property type="term" value="P:'de novo' CTP biosynthetic process"/>
    <property type="evidence" value="ECO:0007669"/>
    <property type="project" value="UniProtKB-UniRule"/>
</dbReference>
<dbReference type="GO" id="GO:0019856">
    <property type="term" value="P:pyrimidine nucleobase biosynthetic process"/>
    <property type="evidence" value="ECO:0007669"/>
    <property type="project" value="TreeGrafter"/>
</dbReference>
<dbReference type="CDD" id="cd03113">
    <property type="entry name" value="CTPS_N"/>
    <property type="match status" value="1"/>
</dbReference>
<dbReference type="CDD" id="cd01746">
    <property type="entry name" value="GATase1_CTP_Synthase"/>
    <property type="match status" value="1"/>
</dbReference>
<dbReference type="FunFam" id="3.40.50.300:FF:000009">
    <property type="entry name" value="CTP synthase"/>
    <property type="match status" value="1"/>
</dbReference>
<dbReference type="FunFam" id="3.40.50.880:FF:000002">
    <property type="entry name" value="CTP synthase"/>
    <property type="match status" value="1"/>
</dbReference>
<dbReference type="Gene3D" id="3.40.50.880">
    <property type="match status" value="1"/>
</dbReference>
<dbReference type="Gene3D" id="3.40.50.300">
    <property type="entry name" value="P-loop containing nucleotide triphosphate hydrolases"/>
    <property type="match status" value="1"/>
</dbReference>
<dbReference type="HAMAP" id="MF_01227">
    <property type="entry name" value="PyrG"/>
    <property type="match status" value="1"/>
</dbReference>
<dbReference type="InterPro" id="IPR029062">
    <property type="entry name" value="Class_I_gatase-like"/>
</dbReference>
<dbReference type="InterPro" id="IPR004468">
    <property type="entry name" value="CTP_synthase"/>
</dbReference>
<dbReference type="InterPro" id="IPR017456">
    <property type="entry name" value="CTP_synthase_N"/>
</dbReference>
<dbReference type="InterPro" id="IPR017926">
    <property type="entry name" value="GATASE"/>
</dbReference>
<dbReference type="InterPro" id="IPR033828">
    <property type="entry name" value="GATase1_CTP_Synthase"/>
</dbReference>
<dbReference type="InterPro" id="IPR027417">
    <property type="entry name" value="P-loop_NTPase"/>
</dbReference>
<dbReference type="NCBIfam" id="NF003792">
    <property type="entry name" value="PRK05380.1"/>
    <property type="match status" value="1"/>
</dbReference>
<dbReference type="NCBIfam" id="TIGR00337">
    <property type="entry name" value="PyrG"/>
    <property type="match status" value="1"/>
</dbReference>
<dbReference type="PANTHER" id="PTHR11550">
    <property type="entry name" value="CTP SYNTHASE"/>
    <property type="match status" value="1"/>
</dbReference>
<dbReference type="PANTHER" id="PTHR11550:SF0">
    <property type="entry name" value="CTP SYNTHASE-RELATED"/>
    <property type="match status" value="1"/>
</dbReference>
<dbReference type="Pfam" id="PF06418">
    <property type="entry name" value="CTP_synth_N"/>
    <property type="match status" value="1"/>
</dbReference>
<dbReference type="Pfam" id="PF00117">
    <property type="entry name" value="GATase"/>
    <property type="match status" value="1"/>
</dbReference>
<dbReference type="SUPFAM" id="SSF52317">
    <property type="entry name" value="Class I glutamine amidotransferase-like"/>
    <property type="match status" value="1"/>
</dbReference>
<dbReference type="SUPFAM" id="SSF52540">
    <property type="entry name" value="P-loop containing nucleoside triphosphate hydrolases"/>
    <property type="match status" value="1"/>
</dbReference>
<dbReference type="PROSITE" id="PS51273">
    <property type="entry name" value="GATASE_TYPE_1"/>
    <property type="match status" value="1"/>
</dbReference>